<accession>B0K2K5</accession>
<sequence length="366" mass="39489">MEVYTIKEGKKLRYGYTTGSCAAAASKAATYMLFTGEKIDTVEIDTPKGWHLILDVLDVTSGEGWVKCGIRKDGGDDPDATHGLIIYSKVELKEGEGIDVYGGEGVGVVTKPGLPVNPGKPAINPVPMSMILNEVKKVLPEGKGVKITISVPGGEKVALKTFNPRLGIVGGISILGTSGIVEPMSEEALKSSLELELSILSAEGHKKVVFAPGNYGKDYAMKEGLEERLIISYGNFLGFMLEKAVEYGFTHVVLAGHIGKLVKVAAGIFNTHSHVADARAEIMAAYVAHFGADKKTVDKVLDSNTTEEALDIIEKAGVNIKDFSQFIADRVYMKCKQYVYDKLNIEVHLISLKRGIIAKAGEKVEW</sequence>
<feature type="chain" id="PRO_1000133750" description="Cobalt-precorrin-5B C(1)-methyltransferase">
    <location>
        <begin position="1"/>
        <end position="366"/>
    </location>
</feature>
<organism>
    <name type="scientific">Thermoanaerobacter sp. (strain X514)</name>
    <dbReference type="NCBI Taxonomy" id="399726"/>
    <lineage>
        <taxon>Bacteria</taxon>
        <taxon>Bacillati</taxon>
        <taxon>Bacillota</taxon>
        <taxon>Clostridia</taxon>
        <taxon>Thermoanaerobacterales</taxon>
        <taxon>Thermoanaerobacteraceae</taxon>
        <taxon>Thermoanaerobacter</taxon>
    </lineage>
</organism>
<gene>
    <name evidence="1" type="primary">cbiD</name>
    <name type="ordered locus">Teth514_0309</name>
</gene>
<comment type="function">
    <text evidence="1">Catalyzes the methylation of C-1 in cobalt-precorrin-5B to form cobalt-precorrin-6A.</text>
</comment>
<comment type="catalytic activity">
    <reaction evidence="1">
        <text>Co-precorrin-5B + S-adenosyl-L-methionine = Co-precorrin-6A + S-adenosyl-L-homocysteine</text>
        <dbReference type="Rhea" id="RHEA:26285"/>
        <dbReference type="ChEBI" id="CHEBI:57856"/>
        <dbReference type="ChEBI" id="CHEBI:59789"/>
        <dbReference type="ChEBI" id="CHEBI:60063"/>
        <dbReference type="ChEBI" id="CHEBI:60064"/>
        <dbReference type="EC" id="2.1.1.195"/>
    </reaction>
</comment>
<comment type="pathway">
    <text evidence="1">Cofactor biosynthesis; adenosylcobalamin biosynthesis; cob(II)yrinate a,c-diamide from sirohydrochlorin (anaerobic route): step 6/10.</text>
</comment>
<comment type="similarity">
    <text evidence="1">Belongs to the CbiD family.</text>
</comment>
<protein>
    <recommendedName>
        <fullName evidence="1">Cobalt-precorrin-5B C(1)-methyltransferase</fullName>
        <ecNumber evidence="1">2.1.1.195</ecNumber>
    </recommendedName>
    <alternativeName>
        <fullName evidence="1">Cobalt-precorrin-6A synthase</fullName>
    </alternativeName>
</protein>
<name>CBID_THEPX</name>
<proteinExistence type="inferred from homology"/>
<evidence type="ECO:0000255" key="1">
    <source>
        <dbReference type="HAMAP-Rule" id="MF_00787"/>
    </source>
</evidence>
<dbReference type="EC" id="2.1.1.195" evidence="1"/>
<dbReference type="EMBL" id="CP000923">
    <property type="protein sequence ID" value="ABY91625.1"/>
    <property type="molecule type" value="Genomic_DNA"/>
</dbReference>
<dbReference type="RefSeq" id="WP_012268586.1">
    <property type="nucleotide sequence ID" value="NC_010320.1"/>
</dbReference>
<dbReference type="SMR" id="B0K2K5"/>
<dbReference type="KEGG" id="tex:Teth514_0309"/>
<dbReference type="HOGENOM" id="CLU_041273_1_0_9"/>
<dbReference type="UniPathway" id="UPA00148">
    <property type="reaction ID" value="UER00227"/>
</dbReference>
<dbReference type="Proteomes" id="UP000002155">
    <property type="component" value="Chromosome"/>
</dbReference>
<dbReference type="GO" id="GO:0043780">
    <property type="term" value="F:cobalt-precorrin-5B C1-methyltransferase activity"/>
    <property type="evidence" value="ECO:0007669"/>
    <property type="project" value="RHEA"/>
</dbReference>
<dbReference type="GO" id="GO:0019251">
    <property type="term" value="P:anaerobic cobalamin biosynthetic process"/>
    <property type="evidence" value="ECO:0007669"/>
    <property type="project" value="UniProtKB-UniRule"/>
</dbReference>
<dbReference type="GO" id="GO:0032259">
    <property type="term" value="P:methylation"/>
    <property type="evidence" value="ECO:0007669"/>
    <property type="project" value="UniProtKB-KW"/>
</dbReference>
<dbReference type="Gene3D" id="3.30.2110.10">
    <property type="entry name" value="CbiD-like"/>
    <property type="match status" value="1"/>
</dbReference>
<dbReference type="HAMAP" id="MF_00787">
    <property type="entry name" value="CbiD"/>
    <property type="match status" value="1"/>
</dbReference>
<dbReference type="InterPro" id="IPR002748">
    <property type="entry name" value="CbiD"/>
</dbReference>
<dbReference type="InterPro" id="IPR036074">
    <property type="entry name" value="CbiD_sf"/>
</dbReference>
<dbReference type="NCBIfam" id="TIGR00312">
    <property type="entry name" value="cbiD"/>
    <property type="match status" value="1"/>
</dbReference>
<dbReference type="NCBIfam" id="NF000849">
    <property type="entry name" value="PRK00075.1-1"/>
    <property type="match status" value="1"/>
</dbReference>
<dbReference type="PANTHER" id="PTHR35863">
    <property type="entry name" value="COBALT-PRECORRIN-5B C(1)-METHYLTRANSFERASE"/>
    <property type="match status" value="1"/>
</dbReference>
<dbReference type="PANTHER" id="PTHR35863:SF1">
    <property type="entry name" value="COBALT-PRECORRIN-5B C(1)-METHYLTRANSFERASE"/>
    <property type="match status" value="1"/>
</dbReference>
<dbReference type="Pfam" id="PF01888">
    <property type="entry name" value="CbiD"/>
    <property type="match status" value="1"/>
</dbReference>
<dbReference type="PIRSF" id="PIRSF026782">
    <property type="entry name" value="CbiD"/>
    <property type="match status" value="1"/>
</dbReference>
<dbReference type="SUPFAM" id="SSF111342">
    <property type="entry name" value="CbiD-like"/>
    <property type="match status" value="1"/>
</dbReference>
<keyword id="KW-0169">Cobalamin biosynthesis</keyword>
<keyword id="KW-0489">Methyltransferase</keyword>
<keyword id="KW-0949">S-adenosyl-L-methionine</keyword>
<keyword id="KW-0808">Transferase</keyword>
<reference key="1">
    <citation type="submission" date="2008-01" db="EMBL/GenBank/DDBJ databases">
        <title>Complete sequence of Thermoanaerobacter sp. X514.</title>
        <authorList>
            <consortium name="US DOE Joint Genome Institute"/>
            <person name="Copeland A."/>
            <person name="Lucas S."/>
            <person name="Lapidus A."/>
            <person name="Barry K."/>
            <person name="Glavina del Rio T."/>
            <person name="Dalin E."/>
            <person name="Tice H."/>
            <person name="Pitluck S."/>
            <person name="Bruce D."/>
            <person name="Goodwin L."/>
            <person name="Saunders E."/>
            <person name="Brettin T."/>
            <person name="Detter J.C."/>
            <person name="Han C."/>
            <person name="Schmutz J."/>
            <person name="Larimer F."/>
            <person name="Land M."/>
            <person name="Hauser L."/>
            <person name="Kyrpides N."/>
            <person name="Kim E."/>
            <person name="Hemme C."/>
            <person name="Fields M.W."/>
            <person name="He Z."/>
            <person name="Zhou J."/>
            <person name="Richardson P."/>
        </authorList>
    </citation>
    <scope>NUCLEOTIDE SEQUENCE [LARGE SCALE GENOMIC DNA]</scope>
    <source>
        <strain>X514</strain>
    </source>
</reference>